<protein>
    <recommendedName>
        <fullName evidence="1">Ferredoxin--NADP reductase 1</fullName>
        <shortName evidence="1">FNR 1</shortName>
        <shortName evidence="1">Fd-NADP(+) reductase 1</shortName>
        <ecNumber evidence="1">1.18.1.2</ecNumber>
    </recommendedName>
</protein>
<gene>
    <name type="ordered locus">LCA_0403</name>
</gene>
<sequence length="328" mass="36661">MTAMTNIYETTIIGGGPAGLYAAFQAGLYGLNGQLLEGDQQFGGKVATYAERVIHDIGGMPNITGQDLIQNLTAQAAFYDTPLRTQTLVTDVKYLADQDYYQIDTPDDRYYSQTLILAMGGGVVRPKQLRLFEEQTFENVHYAPANPEDYRDQRVVLIGPGYNLMELAPHLLATAKSVVWLTTKRPFVDEAAEKAFLTAYPQIDYYCQPLASYQQVDQQVTSITLADQTQITFDQAVVSLGYRRSLQTLDQWQLSAEQIEERPDIWVIGNQIPDRAGISLLTSAFQDGITAVTEIVAQLKPTAKTPMVTTHNPVFQADTKAYWQERLR</sequence>
<keyword id="KW-0274">FAD</keyword>
<keyword id="KW-0285">Flavoprotein</keyword>
<keyword id="KW-0521">NADP</keyword>
<keyword id="KW-0560">Oxidoreductase</keyword>
<keyword id="KW-1185">Reference proteome</keyword>
<evidence type="ECO:0000255" key="1">
    <source>
        <dbReference type="HAMAP-Rule" id="MF_01685"/>
    </source>
</evidence>
<comment type="catalytic activity">
    <reaction evidence="1">
        <text>2 reduced [2Fe-2S]-[ferredoxin] + NADP(+) + H(+) = 2 oxidized [2Fe-2S]-[ferredoxin] + NADPH</text>
        <dbReference type="Rhea" id="RHEA:20125"/>
        <dbReference type="Rhea" id="RHEA-COMP:10000"/>
        <dbReference type="Rhea" id="RHEA-COMP:10001"/>
        <dbReference type="ChEBI" id="CHEBI:15378"/>
        <dbReference type="ChEBI" id="CHEBI:33737"/>
        <dbReference type="ChEBI" id="CHEBI:33738"/>
        <dbReference type="ChEBI" id="CHEBI:57783"/>
        <dbReference type="ChEBI" id="CHEBI:58349"/>
        <dbReference type="EC" id="1.18.1.2"/>
    </reaction>
</comment>
<comment type="cofactor">
    <cofactor evidence="1">
        <name>FAD</name>
        <dbReference type="ChEBI" id="CHEBI:57692"/>
    </cofactor>
    <text evidence="1">Binds 1 FAD per subunit.</text>
</comment>
<comment type="subunit">
    <text evidence="1">Homodimer.</text>
</comment>
<comment type="similarity">
    <text evidence="1">Belongs to the ferredoxin--NADP reductase type 2 family.</text>
</comment>
<dbReference type="EC" id="1.18.1.2" evidence="1"/>
<dbReference type="EMBL" id="CR936503">
    <property type="protein sequence ID" value="CAI54704.1"/>
    <property type="molecule type" value="Genomic_DNA"/>
</dbReference>
<dbReference type="SMR" id="Q38YM3"/>
<dbReference type="STRING" id="314315.LCA_0403"/>
<dbReference type="KEGG" id="lsa:LCA_0403"/>
<dbReference type="eggNOG" id="COG0492">
    <property type="taxonomic scope" value="Bacteria"/>
</dbReference>
<dbReference type="HOGENOM" id="CLU_031864_5_5_9"/>
<dbReference type="Proteomes" id="UP000002707">
    <property type="component" value="Chromosome"/>
</dbReference>
<dbReference type="GO" id="GO:0004324">
    <property type="term" value="F:ferredoxin-NADP+ reductase activity"/>
    <property type="evidence" value="ECO:0007669"/>
    <property type="project" value="UniProtKB-UniRule"/>
</dbReference>
<dbReference type="GO" id="GO:0050660">
    <property type="term" value="F:flavin adenine dinucleotide binding"/>
    <property type="evidence" value="ECO:0007669"/>
    <property type="project" value="UniProtKB-UniRule"/>
</dbReference>
<dbReference type="GO" id="GO:0050661">
    <property type="term" value="F:NADP binding"/>
    <property type="evidence" value="ECO:0007669"/>
    <property type="project" value="UniProtKB-UniRule"/>
</dbReference>
<dbReference type="Gene3D" id="3.50.50.60">
    <property type="entry name" value="FAD/NAD(P)-binding domain"/>
    <property type="match status" value="2"/>
</dbReference>
<dbReference type="HAMAP" id="MF_01685">
    <property type="entry name" value="FENR2"/>
    <property type="match status" value="1"/>
</dbReference>
<dbReference type="InterPro" id="IPR036188">
    <property type="entry name" value="FAD/NAD-bd_sf"/>
</dbReference>
<dbReference type="InterPro" id="IPR023753">
    <property type="entry name" value="FAD/NAD-binding_dom"/>
</dbReference>
<dbReference type="InterPro" id="IPR022890">
    <property type="entry name" value="Fd--NADP_Rdtase_type_2"/>
</dbReference>
<dbReference type="InterPro" id="IPR050097">
    <property type="entry name" value="Ferredoxin-NADP_redctase_2"/>
</dbReference>
<dbReference type="PANTHER" id="PTHR48105">
    <property type="entry name" value="THIOREDOXIN REDUCTASE 1-RELATED-RELATED"/>
    <property type="match status" value="1"/>
</dbReference>
<dbReference type="Pfam" id="PF07992">
    <property type="entry name" value="Pyr_redox_2"/>
    <property type="match status" value="1"/>
</dbReference>
<dbReference type="PRINTS" id="PR00368">
    <property type="entry name" value="FADPNR"/>
</dbReference>
<dbReference type="PRINTS" id="PR00469">
    <property type="entry name" value="PNDRDTASEII"/>
</dbReference>
<dbReference type="SUPFAM" id="SSF51905">
    <property type="entry name" value="FAD/NAD(P)-binding domain"/>
    <property type="match status" value="1"/>
</dbReference>
<accession>Q38YM3</accession>
<name>FENR1_LATSS</name>
<feature type="chain" id="PRO_0000364860" description="Ferredoxin--NADP reductase 1">
    <location>
        <begin position="1"/>
        <end position="328"/>
    </location>
</feature>
<feature type="binding site" evidence="1">
    <location>
        <position position="37"/>
    </location>
    <ligand>
        <name>FAD</name>
        <dbReference type="ChEBI" id="CHEBI:57692"/>
    </ligand>
</feature>
<feature type="binding site" evidence="1">
    <location>
        <position position="45"/>
    </location>
    <ligand>
        <name>FAD</name>
        <dbReference type="ChEBI" id="CHEBI:57692"/>
    </ligand>
</feature>
<feature type="binding site" evidence="1">
    <location>
        <position position="49"/>
    </location>
    <ligand>
        <name>FAD</name>
        <dbReference type="ChEBI" id="CHEBI:57692"/>
    </ligand>
</feature>
<feature type="binding site" evidence="1">
    <location>
        <position position="89"/>
    </location>
    <ligand>
        <name>FAD</name>
        <dbReference type="ChEBI" id="CHEBI:57692"/>
    </ligand>
</feature>
<feature type="binding site" evidence="1">
    <location>
        <position position="310"/>
    </location>
    <ligand>
        <name>FAD</name>
        <dbReference type="ChEBI" id="CHEBI:57692"/>
    </ligand>
</feature>
<reference key="1">
    <citation type="journal article" date="2005" name="Nat. Biotechnol.">
        <title>The complete genome sequence of the meat-borne lactic acid bacterium Lactobacillus sakei 23K.</title>
        <authorList>
            <person name="Chaillou S."/>
            <person name="Champomier-Verges M.-C."/>
            <person name="Cornet M."/>
            <person name="Crutz-Le Coq A.-M."/>
            <person name="Dudez A.-M."/>
            <person name="Martin V."/>
            <person name="Beaufils S."/>
            <person name="Darbon-Rongere E."/>
            <person name="Bossy R."/>
            <person name="Loux V."/>
            <person name="Zagorec M."/>
        </authorList>
    </citation>
    <scope>NUCLEOTIDE SEQUENCE [LARGE SCALE GENOMIC DNA]</scope>
    <source>
        <strain>23K</strain>
    </source>
</reference>
<proteinExistence type="inferred from homology"/>
<organism>
    <name type="scientific">Latilactobacillus sakei subsp. sakei (strain 23K)</name>
    <name type="common">Lactobacillus sakei subsp. sakei</name>
    <dbReference type="NCBI Taxonomy" id="314315"/>
    <lineage>
        <taxon>Bacteria</taxon>
        <taxon>Bacillati</taxon>
        <taxon>Bacillota</taxon>
        <taxon>Bacilli</taxon>
        <taxon>Lactobacillales</taxon>
        <taxon>Lactobacillaceae</taxon>
        <taxon>Latilactobacillus</taxon>
    </lineage>
</organism>